<dbReference type="RefSeq" id="NP_001076023.4">
    <property type="nucleotide sequence ID" value="NM_001082554.4"/>
</dbReference>
<dbReference type="SMR" id="Q5DRA3"/>
<dbReference type="FunCoup" id="Q5DRA3">
    <property type="interactions" value="145"/>
</dbReference>
<dbReference type="GlyCosmos" id="Q5DRA3">
    <property type="glycosylation" value="3 sites, No reported glycans"/>
</dbReference>
<dbReference type="Ensembl" id="ENSPTRT00000032092.4">
    <property type="protein sequence ID" value="ENSPTRP00000047948.3"/>
    <property type="gene ID" value="ENSPTRG00000017346.7"/>
</dbReference>
<dbReference type="GeneID" id="100034696"/>
<dbReference type="GeneTree" id="ENSGT00940000162232"/>
<dbReference type="InParanoid" id="Q5DRA3"/>
<dbReference type="Proteomes" id="UP000002277">
    <property type="component" value="Chromosome 5"/>
</dbReference>
<dbReference type="Bgee" id="ENSPTRG00000017346">
    <property type="expression patterns" value="Expressed in dorsolateral prefrontal cortex and 21 other cell types or tissues"/>
</dbReference>
<dbReference type="GO" id="GO:0005886">
    <property type="term" value="C:plasma membrane"/>
    <property type="evidence" value="ECO:0007669"/>
    <property type="project" value="UniProtKB-SubCell"/>
</dbReference>
<dbReference type="GO" id="GO:0005509">
    <property type="term" value="F:calcium ion binding"/>
    <property type="evidence" value="ECO:0007669"/>
    <property type="project" value="InterPro"/>
</dbReference>
<dbReference type="GO" id="GO:0007156">
    <property type="term" value="P:homophilic cell adhesion via plasma membrane adhesion molecules"/>
    <property type="evidence" value="ECO:0007669"/>
    <property type="project" value="InterPro"/>
</dbReference>
<dbReference type="GO" id="GO:0007399">
    <property type="term" value="P:nervous system development"/>
    <property type="evidence" value="ECO:0007669"/>
    <property type="project" value="UniProtKB-ARBA"/>
</dbReference>
<dbReference type="CDD" id="cd11304">
    <property type="entry name" value="Cadherin_repeat"/>
    <property type="match status" value="5"/>
</dbReference>
<dbReference type="FunFam" id="2.60.40.60:FF:000004">
    <property type="entry name" value="Protocadherin 1 gamma 2"/>
    <property type="match status" value="1"/>
</dbReference>
<dbReference type="FunFam" id="2.60.40.60:FF:000001">
    <property type="entry name" value="Protocadherin alpha 2"/>
    <property type="match status" value="1"/>
</dbReference>
<dbReference type="FunFam" id="2.60.40.60:FF:000002">
    <property type="entry name" value="Protocadherin alpha 2"/>
    <property type="match status" value="1"/>
</dbReference>
<dbReference type="FunFam" id="2.60.40.60:FF:000006">
    <property type="entry name" value="Protocadherin alpha 2"/>
    <property type="match status" value="1"/>
</dbReference>
<dbReference type="FunFam" id="2.60.40.60:FF:000007">
    <property type="entry name" value="Protocadherin alpha 2"/>
    <property type="match status" value="1"/>
</dbReference>
<dbReference type="FunFam" id="2.60.40.60:FF:000129">
    <property type="entry name" value="protocadherin alpha-C2 isoform X1"/>
    <property type="match status" value="1"/>
</dbReference>
<dbReference type="Gene3D" id="2.60.40.60">
    <property type="entry name" value="Cadherins"/>
    <property type="match status" value="6"/>
</dbReference>
<dbReference type="InterPro" id="IPR002126">
    <property type="entry name" value="Cadherin-like_dom"/>
</dbReference>
<dbReference type="InterPro" id="IPR015919">
    <property type="entry name" value="Cadherin-like_sf"/>
</dbReference>
<dbReference type="InterPro" id="IPR031904">
    <property type="entry name" value="Cadherin_CBD"/>
</dbReference>
<dbReference type="InterPro" id="IPR020894">
    <property type="entry name" value="Cadherin_CS"/>
</dbReference>
<dbReference type="InterPro" id="IPR013164">
    <property type="entry name" value="Cadherin_N"/>
</dbReference>
<dbReference type="InterPro" id="IPR050174">
    <property type="entry name" value="Protocadherin/Cadherin-CA"/>
</dbReference>
<dbReference type="PANTHER" id="PTHR24028">
    <property type="entry name" value="CADHERIN-87A"/>
    <property type="match status" value="1"/>
</dbReference>
<dbReference type="PANTHER" id="PTHR24028:SF272">
    <property type="entry name" value="PROTOCADHERIN GAMMA-C4"/>
    <property type="match status" value="1"/>
</dbReference>
<dbReference type="Pfam" id="PF00028">
    <property type="entry name" value="Cadherin"/>
    <property type="match status" value="5"/>
</dbReference>
<dbReference type="Pfam" id="PF08266">
    <property type="entry name" value="Cadherin_2"/>
    <property type="match status" value="1"/>
</dbReference>
<dbReference type="Pfam" id="PF15974">
    <property type="entry name" value="Cadherin_tail"/>
    <property type="match status" value="1"/>
</dbReference>
<dbReference type="PRINTS" id="PR00205">
    <property type="entry name" value="CADHERIN"/>
</dbReference>
<dbReference type="SMART" id="SM00112">
    <property type="entry name" value="CA"/>
    <property type="match status" value="6"/>
</dbReference>
<dbReference type="SUPFAM" id="SSF49313">
    <property type="entry name" value="Cadherin-like"/>
    <property type="match status" value="6"/>
</dbReference>
<dbReference type="PROSITE" id="PS00232">
    <property type="entry name" value="CADHERIN_1"/>
    <property type="match status" value="5"/>
</dbReference>
<dbReference type="PROSITE" id="PS50268">
    <property type="entry name" value="CADHERIN_2"/>
    <property type="match status" value="6"/>
</dbReference>
<proteinExistence type="inferred from homology"/>
<name>PCDGL_PANTR</name>
<evidence type="ECO:0000250" key="1"/>
<evidence type="ECO:0000255" key="2"/>
<evidence type="ECO:0000255" key="3">
    <source>
        <dbReference type="PROSITE-ProRule" id="PRU00043"/>
    </source>
</evidence>
<evidence type="ECO:0000256" key="4">
    <source>
        <dbReference type="SAM" id="MobiDB-lite"/>
    </source>
</evidence>
<gene>
    <name type="primary">PCDHGC4</name>
</gene>
<reference key="1">
    <citation type="journal article" date="2005" name="Nature">
        <title>Initial sequence of the chimpanzee genome and comparison with the human genome.</title>
        <authorList>
            <consortium name="Chimpanzee sequencing and analysis consortium"/>
        </authorList>
    </citation>
    <scope>NUCLEOTIDE SEQUENCE [LARGE SCALE GENOMIC DNA]</scope>
</reference>
<reference key="2">
    <citation type="journal article" date="2005" name="Genetics">
        <title>Comparative genomics and diversifying selection of the clustered vertebrate protocadherin genes.</title>
        <authorList>
            <person name="Wu Q."/>
        </authorList>
    </citation>
    <scope>IDENTIFICATION</scope>
</reference>
<accession>Q5DRA3</accession>
<sequence>MLRKVRSWTEIWRWATLLFLFYHLGYVCGQIRYPVPEESQEGTFVGNVAQDFLLDTDSLSARRLQVAGEVNQRHFRVDLDSGALLIKNPIDREALCGLSASCIVPLEFVTEGPLEMYRAEVEIVDVNDHAPRFPRQQLDLEIGEAAPPGQRFPLEKAQDADVGSNSISSYRLSSNEHFALDVKKRSDGSLVPELLLEKPLDREKQSDYRLVLTAVDGGNPPRSGTAELRVSVLDVNDNAPAFQQSSYRISVLESAPAGMVLIQLNASDPDLGPSGNVTFYFSGHTPDRVRNLFSLHPTTGKLTLLGPLDFESENYYEFDVRARDGGSPAMEQHCSLRVDLLDVNDNAPYITVTSELGTLPESAEPGTVVALISVQDPDSGSNGDVSLRIPDHLPFALKSAFRNQFSLVTAGPLDREAKSSYDIMVTASDAGNPPLSTHRTIFLNISDVNDNPPSFFQRSHEVFVPENNRPGDLLCSLAASDPDSGLNALISYSLLEPRNRDVSASSFISLNPQTGAVHATRSFDYEQTQTLQFEVQARDRGNPPLSSTVTVRLFVLDLNDNAPAVLRPRARPGSLCPQALPPSVGAGHLITKVTAVDLDSGYNAWVSYQLLEAPDPSLFAVSRYAGEVRTAVPIPADLPPQKLVIVVKDSGSPPLSTSVTLLVSLEEDTHPVVPDLRESSAPREGESRLTLYLAVSLVAICFVSFGSFVALLSKCLRGAACGVTCFPAGTCACLTRSRRREGLPPSNGILRIQLGSDDPIKFVDVGGHSHGCTPLASAPTRSDSFMMVKSPSAPMAGEPVRPSCPPSDLLYGLEQAPPNTDWRFSQAQRPGTSGSQNGDDTGTWPNNQFDTEMLQAMILASASEAADGSSTLGGGAGTMGLSARYGPQFTLQHVPDYRQNVYIPGSNATLTNAAGKRDGKAPAGGNGNKKKSGKKEKK</sequence>
<protein>
    <recommendedName>
        <fullName>Protocadherin gamma-C4</fullName>
        <shortName>PCDH-gamma-C4</shortName>
    </recommendedName>
</protein>
<comment type="function">
    <text>Potential calcium-dependent cell-adhesion protein. May be involved in the establishment and maintenance of specific neuronal connections in the brain.</text>
</comment>
<comment type="subcellular location">
    <subcellularLocation>
        <location evidence="1">Cell membrane</location>
        <topology evidence="1">Single-pass type I membrane protein</topology>
    </subcellularLocation>
</comment>
<feature type="signal peptide" evidence="2">
    <location>
        <begin position="1"/>
        <end position="29"/>
    </location>
</feature>
<feature type="chain" id="PRO_0000003988" description="Protocadherin gamma-C4">
    <location>
        <begin position="30"/>
        <end position="938"/>
    </location>
</feature>
<feature type="topological domain" description="Extracellular" evidence="2">
    <location>
        <begin position="30"/>
        <end position="692"/>
    </location>
</feature>
<feature type="transmembrane region" description="Helical" evidence="2">
    <location>
        <begin position="693"/>
        <end position="713"/>
    </location>
</feature>
<feature type="topological domain" description="Cytoplasmic" evidence="2">
    <location>
        <begin position="714"/>
        <end position="938"/>
    </location>
</feature>
<feature type="domain" description="Cadherin 1" evidence="3">
    <location>
        <begin position="30"/>
        <end position="133"/>
    </location>
</feature>
<feature type="domain" description="Cadherin 2" evidence="3">
    <location>
        <begin position="134"/>
        <end position="242"/>
    </location>
</feature>
<feature type="domain" description="Cadherin 3" evidence="3">
    <location>
        <begin position="243"/>
        <end position="350"/>
    </location>
</feature>
<feature type="domain" description="Cadherin 4" evidence="3">
    <location>
        <begin position="351"/>
        <end position="455"/>
    </location>
</feature>
<feature type="domain" description="Cadherin 5" evidence="3">
    <location>
        <begin position="456"/>
        <end position="565"/>
    </location>
</feature>
<feature type="domain" description="Cadherin 6" evidence="3">
    <location>
        <begin position="572"/>
        <end position="676"/>
    </location>
</feature>
<feature type="region of interest" description="Disordered" evidence="4">
    <location>
        <begin position="791"/>
        <end position="847"/>
    </location>
</feature>
<feature type="region of interest" description="Disordered" evidence="4">
    <location>
        <begin position="908"/>
        <end position="938"/>
    </location>
</feature>
<feature type="compositionally biased region" description="Polar residues" evidence="4">
    <location>
        <begin position="822"/>
        <end position="847"/>
    </location>
</feature>
<feature type="compositionally biased region" description="Basic residues" evidence="4">
    <location>
        <begin position="928"/>
        <end position="938"/>
    </location>
</feature>
<feature type="glycosylation site" description="N-linked (GlcNAc...) asparagine" evidence="2">
    <location>
        <position position="265"/>
    </location>
</feature>
<feature type="glycosylation site" description="N-linked (GlcNAc...) asparagine" evidence="2">
    <location>
        <position position="276"/>
    </location>
</feature>
<feature type="glycosylation site" description="N-linked (GlcNAc...) asparagine" evidence="2">
    <location>
        <position position="444"/>
    </location>
</feature>
<organism>
    <name type="scientific">Pan troglodytes</name>
    <name type="common">Chimpanzee</name>
    <dbReference type="NCBI Taxonomy" id="9598"/>
    <lineage>
        <taxon>Eukaryota</taxon>
        <taxon>Metazoa</taxon>
        <taxon>Chordata</taxon>
        <taxon>Craniata</taxon>
        <taxon>Vertebrata</taxon>
        <taxon>Euteleostomi</taxon>
        <taxon>Mammalia</taxon>
        <taxon>Eutheria</taxon>
        <taxon>Euarchontoglires</taxon>
        <taxon>Primates</taxon>
        <taxon>Haplorrhini</taxon>
        <taxon>Catarrhini</taxon>
        <taxon>Hominidae</taxon>
        <taxon>Pan</taxon>
    </lineage>
</organism>
<keyword id="KW-0106">Calcium</keyword>
<keyword id="KW-0130">Cell adhesion</keyword>
<keyword id="KW-1003">Cell membrane</keyword>
<keyword id="KW-0325">Glycoprotein</keyword>
<keyword id="KW-0472">Membrane</keyword>
<keyword id="KW-1185">Reference proteome</keyword>
<keyword id="KW-0677">Repeat</keyword>
<keyword id="KW-0732">Signal</keyword>
<keyword id="KW-0812">Transmembrane</keyword>
<keyword id="KW-1133">Transmembrane helix</keyword>